<organism>
    <name type="scientific">Aspergillus fumigatus (strain ATCC MYA-4609 / CBS 101355 / FGSC A1100 / Af293)</name>
    <name type="common">Neosartorya fumigata</name>
    <dbReference type="NCBI Taxonomy" id="330879"/>
    <lineage>
        <taxon>Eukaryota</taxon>
        <taxon>Fungi</taxon>
        <taxon>Dikarya</taxon>
        <taxon>Ascomycota</taxon>
        <taxon>Pezizomycotina</taxon>
        <taxon>Eurotiomycetes</taxon>
        <taxon>Eurotiomycetidae</taxon>
        <taxon>Eurotiales</taxon>
        <taxon>Aspergillaceae</taxon>
        <taxon>Aspergillus</taxon>
        <taxon>Aspergillus subgen. Fumigati</taxon>
    </lineage>
</organism>
<evidence type="ECO:0000250" key="1"/>
<evidence type="ECO:0000255" key="2"/>
<evidence type="ECO:0000255" key="3">
    <source>
        <dbReference type="PROSITE-ProRule" id="PRU00548"/>
    </source>
</evidence>
<evidence type="ECO:0000256" key="4">
    <source>
        <dbReference type="SAM" id="MobiDB-lite"/>
    </source>
</evidence>
<evidence type="ECO:0000305" key="5"/>
<proteinExistence type="inferred from homology"/>
<reference key="1">
    <citation type="journal article" date="2005" name="Nature">
        <title>Genomic sequence of the pathogenic and allergenic filamentous fungus Aspergillus fumigatus.</title>
        <authorList>
            <person name="Nierman W.C."/>
            <person name="Pain A."/>
            <person name="Anderson M.J."/>
            <person name="Wortman J.R."/>
            <person name="Kim H.S."/>
            <person name="Arroyo J."/>
            <person name="Berriman M."/>
            <person name="Abe K."/>
            <person name="Archer D.B."/>
            <person name="Bermejo C."/>
            <person name="Bennett J.W."/>
            <person name="Bowyer P."/>
            <person name="Chen D."/>
            <person name="Collins M."/>
            <person name="Coulsen R."/>
            <person name="Davies R."/>
            <person name="Dyer P.S."/>
            <person name="Farman M.L."/>
            <person name="Fedorova N."/>
            <person name="Fedorova N.D."/>
            <person name="Feldblyum T.V."/>
            <person name="Fischer R."/>
            <person name="Fosker N."/>
            <person name="Fraser A."/>
            <person name="Garcia J.L."/>
            <person name="Garcia M.J."/>
            <person name="Goble A."/>
            <person name="Goldman G.H."/>
            <person name="Gomi K."/>
            <person name="Griffith-Jones S."/>
            <person name="Gwilliam R."/>
            <person name="Haas B.J."/>
            <person name="Haas H."/>
            <person name="Harris D.E."/>
            <person name="Horiuchi H."/>
            <person name="Huang J."/>
            <person name="Humphray S."/>
            <person name="Jimenez J."/>
            <person name="Keller N."/>
            <person name="Khouri H."/>
            <person name="Kitamoto K."/>
            <person name="Kobayashi T."/>
            <person name="Konzack S."/>
            <person name="Kulkarni R."/>
            <person name="Kumagai T."/>
            <person name="Lafton A."/>
            <person name="Latge J.-P."/>
            <person name="Li W."/>
            <person name="Lord A."/>
            <person name="Lu C."/>
            <person name="Majoros W.H."/>
            <person name="May G.S."/>
            <person name="Miller B.L."/>
            <person name="Mohamoud Y."/>
            <person name="Molina M."/>
            <person name="Monod M."/>
            <person name="Mouyna I."/>
            <person name="Mulligan S."/>
            <person name="Murphy L.D."/>
            <person name="O'Neil S."/>
            <person name="Paulsen I."/>
            <person name="Penalva M.A."/>
            <person name="Pertea M."/>
            <person name="Price C."/>
            <person name="Pritchard B.L."/>
            <person name="Quail M.A."/>
            <person name="Rabbinowitsch E."/>
            <person name="Rawlins N."/>
            <person name="Rajandream M.A."/>
            <person name="Reichard U."/>
            <person name="Renauld H."/>
            <person name="Robson G.D."/>
            <person name="Rodriguez de Cordoba S."/>
            <person name="Rodriguez-Pena J.M."/>
            <person name="Ronning C.M."/>
            <person name="Rutter S."/>
            <person name="Salzberg S.L."/>
            <person name="Sanchez M."/>
            <person name="Sanchez-Ferrero J.C."/>
            <person name="Saunders D."/>
            <person name="Seeger K."/>
            <person name="Squares R."/>
            <person name="Squares S."/>
            <person name="Takeuchi M."/>
            <person name="Tekaia F."/>
            <person name="Turner G."/>
            <person name="Vazquez de Aldana C.R."/>
            <person name="Weidman J."/>
            <person name="White O."/>
            <person name="Woodward J.R."/>
            <person name="Yu J.-H."/>
            <person name="Fraser C.M."/>
            <person name="Galagan J.E."/>
            <person name="Asai K."/>
            <person name="Machida M."/>
            <person name="Hall N."/>
            <person name="Barrell B.G."/>
            <person name="Denning D.W."/>
        </authorList>
    </citation>
    <scope>NUCLEOTIDE SEQUENCE [LARGE SCALE GENOMIC DNA]</scope>
    <source>
        <strain>ATCC MYA-4609 / CBS 101355 / FGSC A1100 / Af293</strain>
    </source>
</reference>
<gene>
    <name type="primary">ssh4</name>
    <name type="ORF">AFUA_1G14910</name>
</gene>
<protein>
    <recommendedName>
        <fullName>Protein ssh4</fullName>
    </recommendedName>
</protein>
<sequence>MRGSEASGPGAIFGAPSTLTTSVIRNPTSFLSSSTPLPSTDADVIAQNVEHVLLSLTSHNDGGLVGVSGNSSGSTGKGILIGVLSAFGSATVAVLVLAIFFFFKYTRRGRIFLDRIGRPGEFDDEQAFAREEAEALEVMDDMARSEYMRAKSFVEANPPESMQTDISLSQFLAIQEKGVSAWEFQPELEIANCFVEGRTEIEFYDSECSVQTNLPVPKQNDVYYWEAKIYEKPESTLISIGMTTKPYPLFRLPGFHKTSVAYLSTGHRRYNQPFSASPYGPALAQGDVVGVGYRPRSGTIFFTRNGKKLEDVVHGAKTQNFFPTVGANGPCTVHVNFGQMGFVFIEANVKKWGLAPMTGSLAPPPPYGSEQGSILLESGRESAAQISQRVYQDARTSSTVRIPPSRSPGPVRSPTDISLAPLAHIPSHEDVGEGSSHANTIADEQTALLNPTDLDQVPPPEYSSPDGSRRGSDITGDLPNQSSPPIPSYDAAVGNQADNTLRPDGDH</sequence>
<comment type="function">
    <text evidence="1">Components of the endosome-vacuole trafficking pathway that regulates nutrient transport. May be involved in processes which determine whether plasma membrane proteins are degraded or routed to the plasma membrane (By similarity).</text>
</comment>
<comment type="subcellular location">
    <subcellularLocation>
        <location evidence="1">Vacuole membrane</location>
        <topology evidence="1">Single-pass type II membrane protein</topology>
    </subcellularLocation>
    <subcellularLocation>
        <location evidence="1">Endosome membrane</location>
        <topology evidence="1">Single-pass type II membrane protein</topology>
    </subcellularLocation>
</comment>
<comment type="similarity">
    <text evidence="5">Belongs to the SSH4 family.</text>
</comment>
<accession>Q4WRW0</accession>
<keyword id="KW-0967">Endosome</keyword>
<keyword id="KW-0325">Glycoprotein</keyword>
<keyword id="KW-0472">Membrane</keyword>
<keyword id="KW-0653">Protein transport</keyword>
<keyword id="KW-1185">Reference proteome</keyword>
<keyword id="KW-0735">Signal-anchor</keyword>
<keyword id="KW-0812">Transmembrane</keyword>
<keyword id="KW-1133">Transmembrane helix</keyword>
<keyword id="KW-0813">Transport</keyword>
<keyword id="KW-0926">Vacuole</keyword>
<feature type="chain" id="PRO_0000324477" description="Protein ssh4">
    <location>
        <begin position="1"/>
        <end position="507"/>
    </location>
</feature>
<feature type="topological domain" description="Cytoplasmic" evidence="2">
    <location>
        <begin position="1"/>
        <end position="82"/>
    </location>
</feature>
<feature type="transmembrane region" description="Helical; Signal-anchor for type II membrane protein" evidence="2">
    <location>
        <begin position="83"/>
        <end position="103"/>
    </location>
</feature>
<feature type="topological domain" description="Lumenal" evidence="2">
    <location>
        <begin position="104"/>
        <end position="507"/>
    </location>
</feature>
<feature type="domain" description="B30.2/SPRY" evidence="3">
    <location>
        <begin position="146"/>
        <end position="342"/>
    </location>
</feature>
<feature type="region of interest" description="Disordered" evidence="4">
    <location>
        <begin position="385"/>
        <end position="417"/>
    </location>
</feature>
<feature type="region of interest" description="Disordered" evidence="4">
    <location>
        <begin position="449"/>
        <end position="507"/>
    </location>
</feature>
<feature type="compositionally biased region" description="Polar residues" evidence="4">
    <location>
        <begin position="385"/>
        <end position="400"/>
    </location>
</feature>
<feature type="compositionally biased region" description="Low complexity" evidence="4">
    <location>
        <begin position="401"/>
        <end position="414"/>
    </location>
</feature>
<feature type="glycosylation site" description="N-linked (GlcNAc...) asparagine" evidence="2">
    <location>
        <position position="480"/>
    </location>
</feature>
<name>SSH4_ASPFU</name>
<dbReference type="EMBL" id="AAHF01000004">
    <property type="protein sequence ID" value="EAL90822.2"/>
    <property type="molecule type" value="Genomic_DNA"/>
</dbReference>
<dbReference type="RefSeq" id="XP_752860.2">
    <property type="nucleotide sequence ID" value="XM_747767.2"/>
</dbReference>
<dbReference type="SMR" id="Q4WRW0"/>
<dbReference type="FunCoup" id="Q4WRW0">
    <property type="interactions" value="31"/>
</dbReference>
<dbReference type="STRING" id="330879.Q4WRW0"/>
<dbReference type="GlyCosmos" id="Q4WRW0">
    <property type="glycosylation" value="1 site, No reported glycans"/>
</dbReference>
<dbReference type="EnsemblFungi" id="EAL90822">
    <property type="protein sequence ID" value="EAL90822"/>
    <property type="gene ID" value="AFUA_1G14910"/>
</dbReference>
<dbReference type="GeneID" id="3509883"/>
<dbReference type="KEGG" id="afm:AFUA_1G14910"/>
<dbReference type="VEuPathDB" id="FungiDB:Afu1g14910"/>
<dbReference type="eggNOG" id="KOG1477">
    <property type="taxonomic scope" value="Eukaryota"/>
</dbReference>
<dbReference type="HOGENOM" id="CLU_016552_1_1_1"/>
<dbReference type="InParanoid" id="Q4WRW0"/>
<dbReference type="OMA" id="FFFKYTR"/>
<dbReference type="OrthoDB" id="258495at2759"/>
<dbReference type="Proteomes" id="UP000002530">
    <property type="component" value="Chromosome 1"/>
</dbReference>
<dbReference type="GO" id="GO:0010008">
    <property type="term" value="C:endosome membrane"/>
    <property type="evidence" value="ECO:0007669"/>
    <property type="project" value="UniProtKB-SubCell"/>
</dbReference>
<dbReference type="GO" id="GO:0005774">
    <property type="term" value="C:vacuolar membrane"/>
    <property type="evidence" value="ECO:0007669"/>
    <property type="project" value="UniProtKB-SubCell"/>
</dbReference>
<dbReference type="GO" id="GO:0043328">
    <property type="term" value="P:protein transport to vacuole involved in ubiquitin-dependent protein catabolic process via the multivesicular body sorting pathway"/>
    <property type="evidence" value="ECO:0000318"/>
    <property type="project" value="GO_Central"/>
</dbReference>
<dbReference type="CDD" id="cd12910">
    <property type="entry name" value="SPRY_SSH4_like"/>
    <property type="match status" value="1"/>
</dbReference>
<dbReference type="FunFam" id="2.60.120.920:FF:000065">
    <property type="entry name" value="Ear1p"/>
    <property type="match status" value="1"/>
</dbReference>
<dbReference type="Gene3D" id="2.60.120.920">
    <property type="match status" value="1"/>
</dbReference>
<dbReference type="InterPro" id="IPR001870">
    <property type="entry name" value="B30.2/SPRY"/>
</dbReference>
<dbReference type="InterPro" id="IPR043136">
    <property type="entry name" value="B30.2/SPRY_sf"/>
</dbReference>
<dbReference type="InterPro" id="IPR013320">
    <property type="entry name" value="ConA-like_dom_sf"/>
</dbReference>
<dbReference type="InterPro" id="IPR003877">
    <property type="entry name" value="SPRY_dom"/>
</dbReference>
<dbReference type="InterPro" id="IPR035780">
    <property type="entry name" value="SPRY_Ssh4-like"/>
</dbReference>
<dbReference type="InterPro" id="IPR050618">
    <property type="entry name" value="Ubq-SigPath_Reg"/>
</dbReference>
<dbReference type="PANTHER" id="PTHR12864">
    <property type="entry name" value="RAN BINDING PROTEIN 9-RELATED"/>
    <property type="match status" value="1"/>
</dbReference>
<dbReference type="Pfam" id="PF00622">
    <property type="entry name" value="SPRY"/>
    <property type="match status" value="1"/>
</dbReference>
<dbReference type="SMART" id="SM00449">
    <property type="entry name" value="SPRY"/>
    <property type="match status" value="1"/>
</dbReference>
<dbReference type="SUPFAM" id="SSF49899">
    <property type="entry name" value="Concanavalin A-like lectins/glucanases"/>
    <property type="match status" value="1"/>
</dbReference>
<dbReference type="PROSITE" id="PS50188">
    <property type="entry name" value="B302_SPRY"/>
    <property type="match status" value="1"/>
</dbReference>